<proteinExistence type="inferred from homology"/>
<gene>
    <name evidence="1" type="primary">bioD2</name>
    <name type="ordered locus">HD_1680</name>
</gene>
<accession>Q7VL12</accession>
<comment type="function">
    <text evidence="1">Catalyzes a mechanistically unusual reaction, the ATP-dependent insertion of CO2 between the N7 and N8 nitrogen atoms of 7,8-diaminopelargonic acid (DAPA, also called 7,8-diammoniononanoate) to form a ureido ring.</text>
</comment>
<comment type="catalytic activity">
    <reaction evidence="1">
        <text>(7R,8S)-7,8-diammoniononanoate + CO2 + ATP = (4R,5S)-dethiobiotin + ADP + phosphate + 3 H(+)</text>
        <dbReference type="Rhea" id="RHEA:15805"/>
        <dbReference type="ChEBI" id="CHEBI:15378"/>
        <dbReference type="ChEBI" id="CHEBI:16526"/>
        <dbReference type="ChEBI" id="CHEBI:30616"/>
        <dbReference type="ChEBI" id="CHEBI:43474"/>
        <dbReference type="ChEBI" id="CHEBI:149469"/>
        <dbReference type="ChEBI" id="CHEBI:149473"/>
        <dbReference type="ChEBI" id="CHEBI:456216"/>
        <dbReference type="EC" id="6.3.3.3"/>
    </reaction>
</comment>
<comment type="cofactor">
    <cofactor evidence="1">
        <name>Mg(2+)</name>
        <dbReference type="ChEBI" id="CHEBI:18420"/>
    </cofactor>
</comment>
<comment type="pathway">
    <text evidence="1">Cofactor biosynthesis; biotin biosynthesis; biotin from 7,8-diaminononanoate: step 1/2.</text>
</comment>
<comment type="subunit">
    <text evidence="1">Homodimer.</text>
</comment>
<comment type="subcellular location">
    <subcellularLocation>
        <location evidence="1">Cytoplasm</location>
    </subcellularLocation>
</comment>
<comment type="similarity">
    <text evidence="1">Belongs to the dethiobiotin synthetase family.</text>
</comment>
<keyword id="KW-0067">ATP-binding</keyword>
<keyword id="KW-0093">Biotin biosynthesis</keyword>
<keyword id="KW-0963">Cytoplasm</keyword>
<keyword id="KW-0436">Ligase</keyword>
<keyword id="KW-0460">Magnesium</keyword>
<keyword id="KW-0479">Metal-binding</keyword>
<keyword id="KW-0547">Nucleotide-binding</keyword>
<keyword id="KW-1185">Reference proteome</keyword>
<organism>
    <name type="scientific">Haemophilus ducreyi (strain 35000HP / ATCC 700724)</name>
    <dbReference type="NCBI Taxonomy" id="233412"/>
    <lineage>
        <taxon>Bacteria</taxon>
        <taxon>Pseudomonadati</taxon>
        <taxon>Pseudomonadota</taxon>
        <taxon>Gammaproteobacteria</taxon>
        <taxon>Pasteurellales</taxon>
        <taxon>Pasteurellaceae</taxon>
        <taxon>Haemophilus</taxon>
    </lineage>
</organism>
<protein>
    <recommendedName>
        <fullName evidence="1">ATP-dependent dethiobiotin synthetase BioD 2</fullName>
        <ecNumber evidence="1">6.3.3.3</ecNumber>
    </recommendedName>
    <alternativeName>
        <fullName evidence="1">DTB synthetase 2</fullName>
        <shortName evidence="1">DTBS 2</shortName>
    </alternativeName>
    <alternativeName>
        <fullName evidence="1">Dethiobiotin synthase 2</fullName>
    </alternativeName>
</protein>
<dbReference type="EC" id="6.3.3.3" evidence="1"/>
<dbReference type="EMBL" id="AE017143">
    <property type="protein sequence ID" value="AAP96447.1"/>
    <property type="molecule type" value="Genomic_DNA"/>
</dbReference>
<dbReference type="RefSeq" id="WP_010945479.1">
    <property type="nucleotide sequence ID" value="NC_002940.2"/>
</dbReference>
<dbReference type="SMR" id="Q7VL12"/>
<dbReference type="STRING" id="233412.HD_1680"/>
<dbReference type="KEGG" id="hdu:HD_1680"/>
<dbReference type="eggNOG" id="COG0132">
    <property type="taxonomic scope" value="Bacteria"/>
</dbReference>
<dbReference type="HOGENOM" id="CLU_072551_3_0_6"/>
<dbReference type="OrthoDB" id="9802097at2"/>
<dbReference type="UniPathway" id="UPA00078">
    <property type="reaction ID" value="UER00161"/>
</dbReference>
<dbReference type="Proteomes" id="UP000001022">
    <property type="component" value="Chromosome"/>
</dbReference>
<dbReference type="GO" id="GO:0005829">
    <property type="term" value="C:cytosol"/>
    <property type="evidence" value="ECO:0007669"/>
    <property type="project" value="TreeGrafter"/>
</dbReference>
<dbReference type="GO" id="GO:0005524">
    <property type="term" value="F:ATP binding"/>
    <property type="evidence" value="ECO:0007669"/>
    <property type="project" value="UniProtKB-UniRule"/>
</dbReference>
<dbReference type="GO" id="GO:0004141">
    <property type="term" value="F:dethiobiotin synthase activity"/>
    <property type="evidence" value="ECO:0007669"/>
    <property type="project" value="UniProtKB-UniRule"/>
</dbReference>
<dbReference type="GO" id="GO:0000287">
    <property type="term" value="F:magnesium ion binding"/>
    <property type="evidence" value="ECO:0007669"/>
    <property type="project" value="UniProtKB-UniRule"/>
</dbReference>
<dbReference type="GO" id="GO:0009102">
    <property type="term" value="P:biotin biosynthetic process"/>
    <property type="evidence" value="ECO:0007669"/>
    <property type="project" value="UniProtKB-UniRule"/>
</dbReference>
<dbReference type="CDD" id="cd03109">
    <property type="entry name" value="DTBS"/>
    <property type="match status" value="1"/>
</dbReference>
<dbReference type="FunFam" id="3.40.50.300:FF:000292">
    <property type="entry name" value="ATP-dependent dethiobiotin synthetase BioD"/>
    <property type="match status" value="1"/>
</dbReference>
<dbReference type="Gene3D" id="3.40.50.300">
    <property type="entry name" value="P-loop containing nucleotide triphosphate hydrolases"/>
    <property type="match status" value="1"/>
</dbReference>
<dbReference type="HAMAP" id="MF_00336">
    <property type="entry name" value="BioD"/>
    <property type="match status" value="1"/>
</dbReference>
<dbReference type="InterPro" id="IPR004472">
    <property type="entry name" value="DTB_synth_BioD"/>
</dbReference>
<dbReference type="InterPro" id="IPR027417">
    <property type="entry name" value="P-loop_NTPase"/>
</dbReference>
<dbReference type="NCBIfam" id="TIGR00347">
    <property type="entry name" value="bioD"/>
    <property type="match status" value="1"/>
</dbReference>
<dbReference type="PANTHER" id="PTHR43210:SF2">
    <property type="entry name" value="ATP-DEPENDENT DETHIOBIOTIN SYNTHETASE BIOD 2"/>
    <property type="match status" value="1"/>
</dbReference>
<dbReference type="PANTHER" id="PTHR43210">
    <property type="entry name" value="DETHIOBIOTIN SYNTHETASE"/>
    <property type="match status" value="1"/>
</dbReference>
<dbReference type="Pfam" id="PF13500">
    <property type="entry name" value="AAA_26"/>
    <property type="match status" value="1"/>
</dbReference>
<dbReference type="PIRSF" id="PIRSF006755">
    <property type="entry name" value="DTB_synth"/>
    <property type="match status" value="1"/>
</dbReference>
<dbReference type="SUPFAM" id="SSF52540">
    <property type="entry name" value="P-loop containing nucleoside triphosphate hydrolases"/>
    <property type="match status" value="1"/>
</dbReference>
<feature type="chain" id="PRO_0000187968" description="ATP-dependent dethiobiotin synthetase BioD 2">
    <location>
        <begin position="1"/>
        <end position="211"/>
    </location>
</feature>
<feature type="active site" evidence="1">
    <location>
        <position position="38"/>
    </location>
</feature>
<feature type="binding site" evidence="1">
    <location>
        <begin position="13"/>
        <end position="18"/>
    </location>
    <ligand>
        <name>ATP</name>
        <dbReference type="ChEBI" id="CHEBI:30616"/>
    </ligand>
</feature>
<feature type="binding site" evidence="1">
    <location>
        <position position="17"/>
    </location>
    <ligand>
        <name>Mg(2+)</name>
        <dbReference type="ChEBI" id="CHEBI:18420"/>
    </ligand>
</feature>
<feature type="binding site" evidence="1">
    <location>
        <position position="42"/>
    </location>
    <ligand>
        <name>substrate</name>
    </ligand>
</feature>
<feature type="binding site" evidence="1">
    <location>
        <position position="50"/>
    </location>
    <ligand>
        <name>ATP</name>
        <dbReference type="ChEBI" id="CHEBI:30616"/>
    </ligand>
</feature>
<feature type="binding site" evidence="1">
    <location>
        <position position="50"/>
    </location>
    <ligand>
        <name>Mg(2+)</name>
        <dbReference type="ChEBI" id="CHEBI:18420"/>
    </ligand>
</feature>
<feature type="binding site" evidence="1">
    <location>
        <begin position="115"/>
        <end position="118"/>
    </location>
    <ligand>
        <name>ATP</name>
        <dbReference type="ChEBI" id="CHEBI:30616"/>
    </ligand>
</feature>
<feature type="binding site" evidence="1">
    <location>
        <position position="115"/>
    </location>
    <ligand>
        <name>Mg(2+)</name>
        <dbReference type="ChEBI" id="CHEBI:18420"/>
    </ligand>
</feature>
<feature type="binding site" evidence="1">
    <location>
        <begin position="175"/>
        <end position="176"/>
    </location>
    <ligand>
        <name>ATP</name>
        <dbReference type="ChEBI" id="CHEBI:30616"/>
    </ligand>
</feature>
<sequence>MGKIIFVSGIDTDIGKTIATGFYAKRLMQQGFSVITQKMIQTGCQHISADIIKHRQLQGIELTAEDLNGITCPYLFRYPCSPHLAAEMENNPILPSKIAQASALLAQKYDYVLLEGAGGLAVPYNSQQTTLDYIVEQQLPLILVTSAKLGSINHTLLSLIVCQQHKIEMEAVIYNTYPLEDEKIAKSTQLYLQQYIKQHFPNTEFLVMDRQ</sequence>
<reference key="1">
    <citation type="submission" date="2003-06" db="EMBL/GenBank/DDBJ databases">
        <title>The complete genome sequence of Haemophilus ducreyi.</title>
        <authorList>
            <person name="Munson R.S. Jr."/>
            <person name="Ray W.C."/>
            <person name="Mahairas G."/>
            <person name="Sabo P."/>
            <person name="Mungur R."/>
            <person name="Johnson L."/>
            <person name="Nguyen D."/>
            <person name="Wang J."/>
            <person name="Forst C."/>
            <person name="Hood L."/>
        </authorList>
    </citation>
    <scope>NUCLEOTIDE SEQUENCE [LARGE SCALE GENOMIC DNA]</scope>
    <source>
        <strain>35000HP / ATCC 700724</strain>
    </source>
</reference>
<evidence type="ECO:0000255" key="1">
    <source>
        <dbReference type="HAMAP-Rule" id="MF_00336"/>
    </source>
</evidence>
<name>BIOD2_HAEDU</name>